<comment type="function">
    <text evidence="1">Probably part of an ABC transporter complex. Responsible for energy coupling to the transport system (By similarity).</text>
</comment>
<comment type="subcellular location">
    <subcellularLocation>
        <location evidence="1">Cell membrane</location>
        <topology evidence="1">Peripheral membrane protein</topology>
    </subcellularLocation>
</comment>
<comment type="similarity">
    <text evidence="4">Belongs to the ABC transporter superfamily.</text>
</comment>
<sequence length="641" mass="71163">MRKKEGRTMIEIKDLWYTYPGRTEPTLKGVNLKIEEGEFVLLTGPTGCGKSTLLKTLNGIIPHESGGVFSGSIRVNGIETRNSNQMELSSAVGLVFQNPDDQIFSTSVEDEVAFGPENLCLDREEIDKKVEEALRMVGMAEHRLDSTNALSGGQKQRICIASMLAMMPEILAMDEPVSQMDPLGTREILNTVRELNRELKITILLVEHRLHELMSFADRVVIMDGGKIVLDQPTSKAFDYIEVFHRLGLRVPEPVELCHTLGIKASPLSAEEALAVLGAGNCKEKVKTPRNFSNPEEETGRRTDPAERNEFVNTGSGNIKYGDNRSENKGSENRDSIISIRDLWSGYEKNRMVLKGINLEIRKGERVAIMGTNGSGKSTLLLNLAAMLKPYKGSVKVFGGDIQPRNSYSFAGRVGFVFQNPDLMLFCDSVDEEARFGPFQLKYKDIEERTKTSLEAMSILDLRQDLPQSLSRGQRLRTAVASVLSIDPEIILLDEPTTGQDRVNIEHMMNYFKDNCSTLVFCTHDIEIAMLYATRLLVMDDGRIIADGKGREVIKNIEILKQASLTQPPVVEIANYLGVDAISITELVEVLTRRSSEVKKDDGENYERMSSELTNSELADSGVVNSELADSGVVNSEGIKC</sequence>
<gene>
    <name type="ordered locus">MA_0870</name>
</gene>
<dbReference type="EC" id="7.-.-.-"/>
<dbReference type="EMBL" id="AE010299">
    <property type="protein sequence ID" value="AAM04309.1"/>
    <property type="molecule type" value="Genomic_DNA"/>
</dbReference>
<dbReference type="SMR" id="Q8TSC8"/>
<dbReference type="STRING" id="188937.MA_0870"/>
<dbReference type="TCDB" id="3.A.1.33.2">
    <property type="family name" value="the atp-binding cassette (abc) superfamily"/>
</dbReference>
<dbReference type="EnsemblBacteria" id="AAM04309">
    <property type="protein sequence ID" value="AAM04309"/>
    <property type="gene ID" value="MA_0870"/>
</dbReference>
<dbReference type="KEGG" id="mac:MA_0870"/>
<dbReference type="HOGENOM" id="CLU_000604_86_7_2"/>
<dbReference type="InParanoid" id="Q8TSC8"/>
<dbReference type="OrthoDB" id="35850at2157"/>
<dbReference type="PhylomeDB" id="Q8TSC8"/>
<dbReference type="Proteomes" id="UP000002487">
    <property type="component" value="Chromosome"/>
</dbReference>
<dbReference type="GO" id="GO:0005886">
    <property type="term" value="C:plasma membrane"/>
    <property type="evidence" value="ECO:0000318"/>
    <property type="project" value="GO_Central"/>
</dbReference>
<dbReference type="GO" id="GO:0005524">
    <property type="term" value="F:ATP binding"/>
    <property type="evidence" value="ECO:0007669"/>
    <property type="project" value="UniProtKB-KW"/>
</dbReference>
<dbReference type="GO" id="GO:0016887">
    <property type="term" value="F:ATP hydrolysis activity"/>
    <property type="evidence" value="ECO:0007669"/>
    <property type="project" value="InterPro"/>
</dbReference>
<dbReference type="GO" id="GO:0022857">
    <property type="term" value="F:transmembrane transporter activity"/>
    <property type="evidence" value="ECO:0000318"/>
    <property type="project" value="GO_Central"/>
</dbReference>
<dbReference type="GO" id="GO:0055085">
    <property type="term" value="P:transmembrane transport"/>
    <property type="evidence" value="ECO:0000318"/>
    <property type="project" value="GO_Central"/>
</dbReference>
<dbReference type="CDD" id="cd03225">
    <property type="entry name" value="ABC_cobalt_CbiO_domain1"/>
    <property type="match status" value="2"/>
</dbReference>
<dbReference type="FunFam" id="3.40.50.300:FF:000760">
    <property type="entry name" value="Cobalt ABC transporter ATP-binding protein"/>
    <property type="match status" value="1"/>
</dbReference>
<dbReference type="FunFam" id="3.40.50.300:FF:000224">
    <property type="entry name" value="Energy-coupling factor transporter ATP-binding protein EcfA"/>
    <property type="match status" value="1"/>
</dbReference>
<dbReference type="Gene3D" id="3.40.50.300">
    <property type="entry name" value="P-loop containing nucleotide triphosphate hydrolases"/>
    <property type="match status" value="2"/>
</dbReference>
<dbReference type="InterPro" id="IPR003593">
    <property type="entry name" value="AAA+_ATPase"/>
</dbReference>
<dbReference type="InterPro" id="IPR003439">
    <property type="entry name" value="ABC_transporter-like_ATP-bd"/>
</dbReference>
<dbReference type="InterPro" id="IPR017871">
    <property type="entry name" value="ABC_transporter-like_CS"/>
</dbReference>
<dbReference type="InterPro" id="IPR015856">
    <property type="entry name" value="ABC_transpr_CbiO/EcfA_su"/>
</dbReference>
<dbReference type="InterPro" id="IPR050095">
    <property type="entry name" value="ECF_ABC_transporter_ATP-bd"/>
</dbReference>
<dbReference type="InterPro" id="IPR027417">
    <property type="entry name" value="P-loop_NTPase"/>
</dbReference>
<dbReference type="NCBIfam" id="NF010167">
    <property type="entry name" value="PRK13648.1"/>
    <property type="match status" value="2"/>
</dbReference>
<dbReference type="PANTHER" id="PTHR43553">
    <property type="entry name" value="HEAVY METAL TRANSPORTER"/>
    <property type="match status" value="1"/>
</dbReference>
<dbReference type="Pfam" id="PF00005">
    <property type="entry name" value="ABC_tran"/>
    <property type="match status" value="2"/>
</dbReference>
<dbReference type="SMART" id="SM00382">
    <property type="entry name" value="AAA"/>
    <property type="match status" value="2"/>
</dbReference>
<dbReference type="SUPFAM" id="SSF52540">
    <property type="entry name" value="P-loop containing nucleoside triphosphate hydrolases"/>
    <property type="match status" value="2"/>
</dbReference>
<dbReference type="PROSITE" id="PS00211">
    <property type="entry name" value="ABC_TRANSPORTER_1"/>
    <property type="match status" value="1"/>
</dbReference>
<dbReference type="PROSITE" id="PS50893">
    <property type="entry name" value="ABC_TRANSPORTER_2"/>
    <property type="match status" value="2"/>
</dbReference>
<protein>
    <recommendedName>
        <fullName>Putative ABC transporter ATP-binding protein MA_0870</fullName>
        <ecNumber>7.-.-.-</ecNumber>
    </recommendedName>
</protein>
<proteinExistence type="inferred from homology"/>
<evidence type="ECO:0000250" key="1"/>
<evidence type="ECO:0000255" key="2">
    <source>
        <dbReference type="PROSITE-ProRule" id="PRU00434"/>
    </source>
</evidence>
<evidence type="ECO:0000256" key="3">
    <source>
        <dbReference type="SAM" id="MobiDB-lite"/>
    </source>
</evidence>
<evidence type="ECO:0000305" key="4"/>
<name>Y870_METAC</name>
<keyword id="KW-0067">ATP-binding</keyword>
<keyword id="KW-1003">Cell membrane</keyword>
<keyword id="KW-0472">Membrane</keyword>
<keyword id="KW-0547">Nucleotide-binding</keyword>
<keyword id="KW-1185">Reference proteome</keyword>
<keyword id="KW-0677">Repeat</keyword>
<keyword id="KW-1278">Translocase</keyword>
<keyword id="KW-0813">Transport</keyword>
<organism>
    <name type="scientific">Methanosarcina acetivorans (strain ATCC 35395 / DSM 2834 / JCM 12185 / C2A)</name>
    <dbReference type="NCBI Taxonomy" id="188937"/>
    <lineage>
        <taxon>Archaea</taxon>
        <taxon>Methanobacteriati</taxon>
        <taxon>Methanobacteriota</taxon>
        <taxon>Stenosarchaea group</taxon>
        <taxon>Methanomicrobia</taxon>
        <taxon>Methanosarcinales</taxon>
        <taxon>Methanosarcinaceae</taxon>
        <taxon>Methanosarcina</taxon>
    </lineage>
</organism>
<reference key="1">
    <citation type="journal article" date="2002" name="Genome Res.">
        <title>The genome of Methanosarcina acetivorans reveals extensive metabolic and physiological diversity.</title>
        <authorList>
            <person name="Galagan J.E."/>
            <person name="Nusbaum C."/>
            <person name="Roy A."/>
            <person name="Endrizzi M.G."/>
            <person name="Macdonald P."/>
            <person name="FitzHugh W."/>
            <person name="Calvo S."/>
            <person name="Engels R."/>
            <person name="Smirnov S."/>
            <person name="Atnoor D."/>
            <person name="Brown A."/>
            <person name="Allen N."/>
            <person name="Naylor J."/>
            <person name="Stange-Thomann N."/>
            <person name="DeArellano K."/>
            <person name="Johnson R."/>
            <person name="Linton L."/>
            <person name="McEwan P."/>
            <person name="McKernan K."/>
            <person name="Talamas J."/>
            <person name="Tirrell A."/>
            <person name="Ye W."/>
            <person name="Zimmer A."/>
            <person name="Barber R.D."/>
            <person name="Cann I."/>
            <person name="Graham D.E."/>
            <person name="Grahame D.A."/>
            <person name="Guss A.M."/>
            <person name="Hedderich R."/>
            <person name="Ingram-Smith C."/>
            <person name="Kuettner H.C."/>
            <person name="Krzycki J.A."/>
            <person name="Leigh J.A."/>
            <person name="Li W."/>
            <person name="Liu J."/>
            <person name="Mukhopadhyay B."/>
            <person name="Reeve J.N."/>
            <person name="Smith K."/>
            <person name="Springer T.A."/>
            <person name="Umayam L.A."/>
            <person name="White O."/>
            <person name="White R.H."/>
            <person name="de Macario E.C."/>
            <person name="Ferry J.G."/>
            <person name="Jarrell K.F."/>
            <person name="Jing H."/>
            <person name="Macario A.J.L."/>
            <person name="Paulsen I.T."/>
            <person name="Pritchett M."/>
            <person name="Sowers K.R."/>
            <person name="Swanson R.V."/>
            <person name="Zinder S.H."/>
            <person name="Lander E."/>
            <person name="Metcalf W.W."/>
            <person name="Birren B."/>
        </authorList>
    </citation>
    <scope>NUCLEOTIDE SEQUENCE [LARGE SCALE GENOMIC DNA]</scope>
    <source>
        <strain>ATCC 35395 / DSM 2834 / JCM 12185 / C2A</strain>
    </source>
</reference>
<accession>Q8TSC8</accession>
<feature type="chain" id="PRO_0000092136" description="Putative ABC transporter ATP-binding protein MA_0870">
    <location>
        <begin position="1"/>
        <end position="641"/>
    </location>
</feature>
<feature type="domain" description="ABC transporter 1" evidence="2">
    <location>
        <begin position="10"/>
        <end position="250"/>
    </location>
</feature>
<feature type="domain" description="ABC transporter 2" evidence="2">
    <location>
        <begin position="338"/>
        <end position="566"/>
    </location>
</feature>
<feature type="region of interest" description="Disordered" evidence="3">
    <location>
        <begin position="286"/>
        <end position="332"/>
    </location>
</feature>
<feature type="compositionally biased region" description="Basic and acidic residues" evidence="3">
    <location>
        <begin position="298"/>
        <end position="310"/>
    </location>
</feature>
<feature type="compositionally biased region" description="Basic and acidic residues" evidence="3">
    <location>
        <begin position="322"/>
        <end position="332"/>
    </location>
</feature>
<feature type="binding site" evidence="2">
    <location>
        <begin position="44"/>
        <end position="51"/>
    </location>
    <ligand>
        <name>ATP</name>
        <dbReference type="ChEBI" id="CHEBI:30616"/>
        <label>1</label>
    </ligand>
</feature>
<feature type="binding site" evidence="2">
    <location>
        <begin position="371"/>
        <end position="378"/>
    </location>
    <ligand>
        <name>ATP</name>
        <dbReference type="ChEBI" id="CHEBI:30616"/>
        <label>2</label>
    </ligand>
</feature>